<proteinExistence type="evidence at transcript level"/>
<protein>
    <recommendedName>
        <fullName evidence="6">Zinc finger CCCH domain-containing protein 14</fullName>
        <shortName evidence="6">AtC3H14</shortName>
    </recommendedName>
</protein>
<dbReference type="EMBL" id="AC013288">
    <property type="protein sequence ID" value="AAG60083.1"/>
    <property type="molecule type" value="Genomic_DNA"/>
</dbReference>
<dbReference type="EMBL" id="CP002684">
    <property type="protein sequence ID" value="AEE34558.1"/>
    <property type="molecule type" value="Genomic_DNA"/>
</dbReference>
<dbReference type="EMBL" id="CP002684">
    <property type="protein sequence ID" value="ANM59370.1"/>
    <property type="molecule type" value="Genomic_DNA"/>
</dbReference>
<dbReference type="RefSeq" id="NP_001321733.1">
    <property type="nucleotide sequence ID" value="NM_001334249.1"/>
</dbReference>
<dbReference type="RefSeq" id="NP_176853.1">
    <property type="nucleotide sequence ID" value="NM_105352.3"/>
</dbReference>
<dbReference type="SMR" id="Q9C9N3"/>
<dbReference type="BioGRID" id="28220">
    <property type="interactions" value="22"/>
</dbReference>
<dbReference type="FunCoup" id="Q9C9N3">
    <property type="interactions" value="22"/>
</dbReference>
<dbReference type="IntAct" id="Q9C9N3">
    <property type="interactions" value="22"/>
</dbReference>
<dbReference type="STRING" id="3702.Q9C9N3"/>
<dbReference type="PaxDb" id="3702-AT1G66810.1"/>
<dbReference type="EnsemblPlants" id="AT1G66810.1">
    <property type="protein sequence ID" value="AT1G66810.1"/>
    <property type="gene ID" value="AT1G66810"/>
</dbReference>
<dbReference type="EnsemblPlants" id="AT1G66810.3">
    <property type="protein sequence ID" value="AT1G66810.3"/>
    <property type="gene ID" value="AT1G66810"/>
</dbReference>
<dbReference type="GeneID" id="842999"/>
<dbReference type="Gramene" id="AT1G66810.1">
    <property type="protein sequence ID" value="AT1G66810.1"/>
    <property type="gene ID" value="AT1G66810"/>
</dbReference>
<dbReference type="Gramene" id="AT1G66810.3">
    <property type="protein sequence ID" value="AT1G66810.3"/>
    <property type="gene ID" value="AT1G66810"/>
</dbReference>
<dbReference type="KEGG" id="ath:AT1G66810"/>
<dbReference type="Araport" id="AT1G66810"/>
<dbReference type="TAIR" id="AT1G66810">
    <property type="gene designation" value="ATC3H14"/>
</dbReference>
<dbReference type="eggNOG" id="KOG1677">
    <property type="taxonomic scope" value="Eukaryota"/>
</dbReference>
<dbReference type="HOGENOM" id="CLU_050602_0_0_1"/>
<dbReference type="InParanoid" id="Q9C9N3"/>
<dbReference type="OMA" id="NENYEVC"/>
<dbReference type="PhylomeDB" id="Q9C9N3"/>
<dbReference type="PRO" id="PR:Q9C9N3"/>
<dbReference type="Proteomes" id="UP000006548">
    <property type="component" value="Chromosome 1"/>
</dbReference>
<dbReference type="ExpressionAtlas" id="Q9C9N3">
    <property type="expression patterns" value="baseline and differential"/>
</dbReference>
<dbReference type="GO" id="GO:0003677">
    <property type="term" value="F:DNA binding"/>
    <property type="evidence" value="ECO:0007669"/>
    <property type="project" value="UniProtKB-KW"/>
</dbReference>
<dbReference type="GO" id="GO:0003729">
    <property type="term" value="F:mRNA binding"/>
    <property type="evidence" value="ECO:0000353"/>
    <property type="project" value="TAIR"/>
</dbReference>
<dbReference type="GO" id="GO:0008270">
    <property type="term" value="F:zinc ion binding"/>
    <property type="evidence" value="ECO:0007669"/>
    <property type="project" value="UniProtKB-KW"/>
</dbReference>
<dbReference type="GO" id="GO:1901347">
    <property type="term" value="P:negative regulation of secondary cell wall biogenesis"/>
    <property type="evidence" value="ECO:0000315"/>
    <property type="project" value="TAIR"/>
</dbReference>
<dbReference type="GO" id="GO:0051511">
    <property type="term" value="P:negative regulation of unidimensional cell growth"/>
    <property type="evidence" value="ECO:0000315"/>
    <property type="project" value="TAIR"/>
</dbReference>
<dbReference type="GO" id="GO:0045893">
    <property type="term" value="P:positive regulation of DNA-templated transcription"/>
    <property type="evidence" value="ECO:0000314"/>
    <property type="project" value="TAIR"/>
</dbReference>
<dbReference type="FunFam" id="4.10.1000.10:FF:000001">
    <property type="entry name" value="zinc finger CCCH domain-containing protein 15-like"/>
    <property type="match status" value="1"/>
</dbReference>
<dbReference type="FunFam" id="4.10.1000.10:FF:000002">
    <property type="entry name" value="Zinc finger protein 36, C3H1 type-like 1"/>
    <property type="match status" value="1"/>
</dbReference>
<dbReference type="Gene3D" id="4.10.1000.10">
    <property type="entry name" value="Zinc finger, CCCH-type"/>
    <property type="match status" value="2"/>
</dbReference>
<dbReference type="InterPro" id="IPR045877">
    <property type="entry name" value="ZFP36-like"/>
</dbReference>
<dbReference type="InterPro" id="IPR000571">
    <property type="entry name" value="Znf_CCCH"/>
</dbReference>
<dbReference type="InterPro" id="IPR036855">
    <property type="entry name" value="Znf_CCCH_sf"/>
</dbReference>
<dbReference type="PANTHER" id="PTHR12547">
    <property type="entry name" value="CCCH ZINC FINGER/TIS11-RELATED"/>
    <property type="match status" value="1"/>
</dbReference>
<dbReference type="PANTHER" id="PTHR12547:SF161">
    <property type="entry name" value="ZINC FINGER CCCH DOMAIN-CONTAINING PROTEIN 14"/>
    <property type="match status" value="1"/>
</dbReference>
<dbReference type="Pfam" id="PF00642">
    <property type="entry name" value="zf-CCCH"/>
    <property type="match status" value="1"/>
</dbReference>
<dbReference type="SMART" id="SM00356">
    <property type="entry name" value="ZnF_C3H1"/>
    <property type="match status" value="2"/>
</dbReference>
<dbReference type="SUPFAM" id="SSF90229">
    <property type="entry name" value="CCCH zinc finger"/>
    <property type="match status" value="2"/>
</dbReference>
<dbReference type="PROSITE" id="PS50103">
    <property type="entry name" value="ZF_C3H1"/>
    <property type="match status" value="2"/>
</dbReference>
<evidence type="ECO:0000255" key="1"/>
<evidence type="ECO:0000255" key="2">
    <source>
        <dbReference type="PROSITE-ProRule" id="PRU00723"/>
    </source>
</evidence>
<evidence type="ECO:0000256" key="3">
    <source>
        <dbReference type="SAM" id="MobiDB-lite"/>
    </source>
</evidence>
<evidence type="ECO:0000269" key="4">
    <source>
    </source>
</evidence>
<evidence type="ECO:0000269" key="5">
    <source>
    </source>
</evidence>
<evidence type="ECO:0000303" key="6">
    <source>
    </source>
</evidence>
<evidence type="ECO:0000312" key="7">
    <source>
        <dbReference type="Araport" id="AT1G66810"/>
    </source>
</evidence>
<evidence type="ECO:0000312" key="8">
    <source>
        <dbReference type="EMBL" id="AAG60083.1"/>
    </source>
</evidence>
<name>C3H14_ARATH</name>
<gene>
    <name evidence="6" type="primary">C3H14</name>
    <name evidence="7" type="ordered locus">At1g66810</name>
    <name evidence="8" type="ORF">F4N21.6</name>
</gene>
<keyword id="KW-0175">Coiled coil</keyword>
<keyword id="KW-0238">DNA-binding</keyword>
<keyword id="KW-0479">Metal-binding</keyword>
<keyword id="KW-1185">Reference proteome</keyword>
<keyword id="KW-0677">Repeat</keyword>
<keyword id="KW-0804">Transcription</keyword>
<keyword id="KW-0805">Transcription regulation</keyword>
<keyword id="KW-0862">Zinc</keyword>
<keyword id="KW-0863">Zinc-finger</keyword>
<accession>Q9C9N3</accession>
<reference key="1">
    <citation type="journal article" date="2000" name="Nature">
        <title>Sequence and analysis of chromosome 1 of the plant Arabidopsis thaliana.</title>
        <authorList>
            <person name="Theologis A."/>
            <person name="Ecker J.R."/>
            <person name="Palm C.J."/>
            <person name="Federspiel N.A."/>
            <person name="Kaul S."/>
            <person name="White O."/>
            <person name="Alonso J."/>
            <person name="Altafi H."/>
            <person name="Araujo R."/>
            <person name="Bowman C.L."/>
            <person name="Brooks S.Y."/>
            <person name="Buehler E."/>
            <person name="Chan A."/>
            <person name="Chao Q."/>
            <person name="Chen H."/>
            <person name="Cheuk R.F."/>
            <person name="Chin C.W."/>
            <person name="Chung M.K."/>
            <person name="Conn L."/>
            <person name="Conway A.B."/>
            <person name="Conway A.R."/>
            <person name="Creasy T.H."/>
            <person name="Dewar K."/>
            <person name="Dunn P."/>
            <person name="Etgu P."/>
            <person name="Feldblyum T.V."/>
            <person name="Feng J.-D."/>
            <person name="Fong B."/>
            <person name="Fujii C.Y."/>
            <person name="Gill J.E."/>
            <person name="Goldsmith A.D."/>
            <person name="Haas B."/>
            <person name="Hansen N.F."/>
            <person name="Hughes B."/>
            <person name="Huizar L."/>
            <person name="Hunter J.L."/>
            <person name="Jenkins J."/>
            <person name="Johnson-Hopson C."/>
            <person name="Khan S."/>
            <person name="Khaykin E."/>
            <person name="Kim C.J."/>
            <person name="Koo H.L."/>
            <person name="Kremenetskaia I."/>
            <person name="Kurtz D.B."/>
            <person name="Kwan A."/>
            <person name="Lam B."/>
            <person name="Langin-Hooper S."/>
            <person name="Lee A."/>
            <person name="Lee J.M."/>
            <person name="Lenz C.A."/>
            <person name="Li J.H."/>
            <person name="Li Y.-P."/>
            <person name="Lin X."/>
            <person name="Liu S.X."/>
            <person name="Liu Z.A."/>
            <person name="Luros J.S."/>
            <person name="Maiti R."/>
            <person name="Marziali A."/>
            <person name="Militscher J."/>
            <person name="Miranda M."/>
            <person name="Nguyen M."/>
            <person name="Nierman W.C."/>
            <person name="Osborne B.I."/>
            <person name="Pai G."/>
            <person name="Peterson J."/>
            <person name="Pham P.K."/>
            <person name="Rizzo M."/>
            <person name="Rooney T."/>
            <person name="Rowley D."/>
            <person name="Sakano H."/>
            <person name="Salzberg S.L."/>
            <person name="Schwartz J.R."/>
            <person name="Shinn P."/>
            <person name="Southwick A.M."/>
            <person name="Sun H."/>
            <person name="Tallon L.J."/>
            <person name="Tambunga G."/>
            <person name="Toriumi M.J."/>
            <person name="Town C.D."/>
            <person name="Utterback T."/>
            <person name="Van Aken S."/>
            <person name="Vaysberg M."/>
            <person name="Vysotskaia V.S."/>
            <person name="Walker M."/>
            <person name="Wu D."/>
            <person name="Yu G."/>
            <person name="Fraser C.M."/>
            <person name="Venter J.C."/>
            <person name="Davis R.W."/>
        </authorList>
    </citation>
    <scope>NUCLEOTIDE SEQUENCE [LARGE SCALE GENOMIC DNA]</scope>
    <source>
        <strain>cv. Columbia</strain>
    </source>
</reference>
<reference key="2">
    <citation type="journal article" date="2017" name="Plant J.">
        <title>Araport11: a complete reannotation of the Arabidopsis thaliana reference genome.</title>
        <authorList>
            <person name="Cheng C.Y."/>
            <person name="Krishnakumar V."/>
            <person name="Chan A.P."/>
            <person name="Thibaud-Nissen F."/>
            <person name="Schobel S."/>
            <person name="Town C.D."/>
        </authorList>
    </citation>
    <scope>GENOME REANNOTATION</scope>
    <source>
        <strain>cv. Columbia</strain>
    </source>
</reference>
<reference key="3">
    <citation type="journal article" date="2008" name="BMC Genomics">
        <title>Genome-wide analysis of CCCH zinc finger family in Arabidopsis and rice.</title>
        <authorList>
            <person name="Wang D."/>
            <person name="Guo Y."/>
            <person name="Wu C."/>
            <person name="Yang G."/>
            <person name="Li Y."/>
            <person name="Zheng C."/>
        </authorList>
    </citation>
    <scope>NOMENCLATURE</scope>
</reference>
<reference key="4">
    <citation type="journal article" date="2014" name="Plant J.">
        <title>AtC3H14, a plant-specific tandem CCCH zinc-finger protein, binds to its target mRNAs in a sequence-specific manner and affects cell elongation in Arabidopsis thaliana.</title>
        <authorList>
            <person name="Kim W.C."/>
            <person name="Kim J.Y."/>
            <person name="Ko J.H."/>
            <person name="Kang H."/>
            <person name="Kim J."/>
            <person name="Han K.H."/>
        </authorList>
    </citation>
    <scope>FUNCTION</scope>
    <scope>TISSUE SPECIFICITY</scope>
</reference>
<reference key="5">
    <citation type="journal article" date="2015" name="J. Exp. Bot.">
        <title>Arabidopsis C3H14 and C3H15 have overlapping roles in the regulation of secondary wall thickening and anther development.</title>
        <authorList>
            <person name="Chai G."/>
            <person name="Kong Y."/>
            <person name="Zhu M."/>
            <person name="Yu L."/>
            <person name="Qi G."/>
            <person name="Tang X."/>
            <person name="Wang Z."/>
            <person name="Cao Y."/>
            <person name="Yu C."/>
            <person name="Zhou G."/>
        </authorList>
    </citation>
    <scope>FUNCTION</scope>
    <scope>TISSUE SPECIFICITY</scope>
    <scope>DISRUPTION PHENOTYPE</scope>
</reference>
<sequence>MEKLAASTVTDLACVTAINSSPPPLSPISEQSFNNKHQEEFAASFASLYNSIFSPESLSPSPPSSSSPPSRVDTTTEHRLLQAKLILEYDELNEHYELCLNRLQSLMTELDSLRHENDSLRFENSDLLKLIRISTSSSSSVSPPAPIHNRQFRHQISDSRSAKRNNQERNSLPKSISVRSQGYLKINHGFEASDLQTSQLSSNSVSSSQKVCVVQTKGEREALELEVYRQGMMKTELCNKWQETGACCYGDNCQFAHGIDELRPVIRHPRYKTEVCRMMVTGAMCPYGHRCHFRHSLTDQERMMMMMLTR</sequence>
<feature type="chain" id="PRO_0000371973" description="Zinc finger CCCH domain-containing protein 14">
    <location>
        <begin position="1"/>
        <end position="310"/>
    </location>
</feature>
<feature type="zinc finger region" description="C3H1-type 1" evidence="2">
    <location>
        <begin position="232"/>
        <end position="260"/>
    </location>
</feature>
<feature type="zinc finger region" description="C3H1-type 2" evidence="2">
    <location>
        <begin position="270"/>
        <end position="298"/>
    </location>
</feature>
<feature type="region of interest" description="Disordered" evidence="3">
    <location>
        <begin position="56"/>
        <end position="75"/>
    </location>
</feature>
<feature type="region of interest" description="Disordered" evidence="3">
    <location>
        <begin position="155"/>
        <end position="174"/>
    </location>
</feature>
<feature type="coiled-coil region" evidence="1">
    <location>
        <begin position="84"/>
        <end position="129"/>
    </location>
</feature>
<feature type="compositionally biased region" description="Basic and acidic residues" evidence="3">
    <location>
        <begin position="155"/>
        <end position="167"/>
    </location>
</feature>
<comment type="function">
    <text evidence="4 5">Functions probably as a transcriptional factor that activates genes involved in secondary cell wall biosynthesis (PubMed:25228083, PubMed:25732536). May play a role in both transcriptional and post-transcriptional regulation (PubMed:25228083). Binds to ssDNA, dsDNA, and ribohomopolymers in vitro (PubMed:25228083). Maybe involved in post-transcriptional regulation of its target genes (PubMed:25228083). Targets RNA of a polygalacturonase, a well-known cell wall modifying gene (PubMed:25228083). Functions redudantly with C3H15 to regulate secondary cell wall formation (PubMed:25732536). C3H14 and C3H15 have overlapping roles in the regulation of secondary cell wall formation and anther development (PubMed:25732536). C3H14 may contribute more to secondary cell wall thickening while C3H15 could be more important in anther development (PubMed:25732536). May regulate at both the transcriptional and post-transcriptional levels the expression of many genes involved in various biological processes, particularly those associated with cell wall metabolism and pollen development (PubMed:25732536).</text>
</comment>
<comment type="interaction">
    <interactant intactId="EBI-15193039">
        <id>Q9C9N3</id>
    </interactant>
    <interactant intactId="EBI-4424563">
        <id>Q93Z00</id>
        <label>TCP14</label>
    </interactant>
    <organismsDiffer>false</organismsDiffer>
    <experiments>3</experiments>
</comment>
<comment type="interaction">
    <interactant intactId="EBI-15193039">
        <id>Q9C9N3</id>
    </interactant>
    <interactant intactId="EBI-15192325">
        <id>Q8LPR5</id>
        <label>TCP4</label>
    </interactant>
    <organismsDiffer>false</organismsDiffer>
    <experiments>3</experiments>
</comment>
<comment type="tissue specificity">
    <text evidence="4 5">Highly expressed in secondary cell wall-forming tissues and the xylem cells of roots (PubMed:25228083). Expressed predominantly in inflorescence stems, flowers and siliques (PubMed:25732536). Highly expressed in the basal portion of stems, where cells are undergoing secondary cell wall thickening (PubMed:25732536).</text>
</comment>
<comment type="disruption phenotype">
    <text evidence="5">The double mutants c3h14 and c3h15 have reductions in stem secondary cell wall thickening and defects in anther development.</text>
</comment>
<comment type="miscellaneous">
    <text evidence="4 5">Plants overexpressing C3H14 exhibit small and slightly curled leaves, and retarded stem elongations due to cell elongation defect and ectopic secondary cell wall formation (PubMed:25228083). Plants overexpressing C3H14 are sterile due to stamen elongation defect, despite normal overall flower morphology (PubMed:25228083). Overexpression of C3H14 results in secondary cell wall thickening in fibers and vessels (PubMed:25732536).</text>
</comment>
<organism>
    <name type="scientific">Arabidopsis thaliana</name>
    <name type="common">Mouse-ear cress</name>
    <dbReference type="NCBI Taxonomy" id="3702"/>
    <lineage>
        <taxon>Eukaryota</taxon>
        <taxon>Viridiplantae</taxon>
        <taxon>Streptophyta</taxon>
        <taxon>Embryophyta</taxon>
        <taxon>Tracheophyta</taxon>
        <taxon>Spermatophyta</taxon>
        <taxon>Magnoliopsida</taxon>
        <taxon>eudicotyledons</taxon>
        <taxon>Gunneridae</taxon>
        <taxon>Pentapetalae</taxon>
        <taxon>rosids</taxon>
        <taxon>malvids</taxon>
        <taxon>Brassicales</taxon>
        <taxon>Brassicaceae</taxon>
        <taxon>Camelineae</taxon>
        <taxon>Arabidopsis</taxon>
    </lineage>
</organism>